<accession>A2C4N0</accession>
<evidence type="ECO:0000255" key="1">
    <source>
        <dbReference type="HAMAP-Rule" id="MF_01324"/>
    </source>
</evidence>
<evidence type="ECO:0000256" key="2">
    <source>
        <dbReference type="SAM" id="MobiDB-lite"/>
    </source>
</evidence>
<gene>
    <name evidence="1" type="primary">rpoC2</name>
    <name type="ordered locus">NATL1_18841</name>
</gene>
<keyword id="KW-0240">DNA-directed RNA polymerase</keyword>
<keyword id="KW-0479">Metal-binding</keyword>
<keyword id="KW-0548">Nucleotidyltransferase</keyword>
<keyword id="KW-0804">Transcription</keyword>
<keyword id="KW-0808">Transferase</keyword>
<keyword id="KW-0862">Zinc</keyword>
<protein>
    <recommendedName>
        <fullName evidence="1">DNA-directed RNA polymerase subunit beta'</fullName>
        <shortName evidence="1">RNAP subunit beta'</shortName>
        <ecNumber evidence="1">2.7.7.6</ecNumber>
    </recommendedName>
    <alternativeName>
        <fullName evidence="1">RNA polymerase subunit beta'</fullName>
    </alternativeName>
    <alternativeName>
        <fullName evidence="1">Transcriptase subunit beta'</fullName>
    </alternativeName>
</protein>
<dbReference type="EC" id="2.7.7.6" evidence="1"/>
<dbReference type="EMBL" id="CP000553">
    <property type="protein sequence ID" value="ABM76440.1"/>
    <property type="molecule type" value="Genomic_DNA"/>
</dbReference>
<dbReference type="RefSeq" id="WP_011824419.1">
    <property type="nucleotide sequence ID" value="NC_008819.1"/>
</dbReference>
<dbReference type="SMR" id="A2C4N0"/>
<dbReference type="KEGG" id="pme:NATL1_18841"/>
<dbReference type="eggNOG" id="COG0086">
    <property type="taxonomic scope" value="Bacteria"/>
</dbReference>
<dbReference type="HOGENOM" id="CLU_000524_1_0_3"/>
<dbReference type="Proteomes" id="UP000002592">
    <property type="component" value="Chromosome"/>
</dbReference>
<dbReference type="GO" id="GO:0000428">
    <property type="term" value="C:DNA-directed RNA polymerase complex"/>
    <property type="evidence" value="ECO:0007669"/>
    <property type="project" value="UniProtKB-KW"/>
</dbReference>
<dbReference type="GO" id="GO:0003677">
    <property type="term" value="F:DNA binding"/>
    <property type="evidence" value="ECO:0007669"/>
    <property type="project" value="UniProtKB-UniRule"/>
</dbReference>
<dbReference type="GO" id="GO:0003899">
    <property type="term" value="F:DNA-directed RNA polymerase activity"/>
    <property type="evidence" value="ECO:0007669"/>
    <property type="project" value="UniProtKB-UniRule"/>
</dbReference>
<dbReference type="GO" id="GO:0008270">
    <property type="term" value="F:zinc ion binding"/>
    <property type="evidence" value="ECO:0007669"/>
    <property type="project" value="UniProtKB-UniRule"/>
</dbReference>
<dbReference type="GO" id="GO:0006351">
    <property type="term" value="P:DNA-templated transcription"/>
    <property type="evidence" value="ECO:0007669"/>
    <property type="project" value="UniProtKB-UniRule"/>
</dbReference>
<dbReference type="CDD" id="cd02655">
    <property type="entry name" value="RNAP_beta'_C"/>
    <property type="match status" value="1"/>
</dbReference>
<dbReference type="FunFam" id="1.10.150.390:FF:000002">
    <property type="entry name" value="DNA-directed RNA polymerase subunit beta"/>
    <property type="match status" value="1"/>
</dbReference>
<dbReference type="Gene3D" id="1.10.132.30">
    <property type="match status" value="1"/>
</dbReference>
<dbReference type="Gene3D" id="1.10.150.390">
    <property type="match status" value="1"/>
</dbReference>
<dbReference type="Gene3D" id="1.10.1790.20">
    <property type="match status" value="1"/>
</dbReference>
<dbReference type="Gene3D" id="2.40.50.100">
    <property type="match status" value="1"/>
</dbReference>
<dbReference type="Gene3D" id="1.10.274.100">
    <property type="entry name" value="RNA polymerase Rpb1, domain 3"/>
    <property type="match status" value="1"/>
</dbReference>
<dbReference type="HAMAP" id="MF_01324">
    <property type="entry name" value="RNApol_bact_RpoC2"/>
    <property type="match status" value="1"/>
</dbReference>
<dbReference type="InterPro" id="IPR012756">
    <property type="entry name" value="DNA-dir_RpoC2_beta_pp"/>
</dbReference>
<dbReference type="InterPro" id="IPR045867">
    <property type="entry name" value="DNA-dir_RpoC_beta_prime"/>
</dbReference>
<dbReference type="InterPro" id="IPR007066">
    <property type="entry name" value="RNA_pol_Rpb1_3"/>
</dbReference>
<dbReference type="InterPro" id="IPR042102">
    <property type="entry name" value="RNA_pol_Rpb1_3_sf"/>
</dbReference>
<dbReference type="InterPro" id="IPR007083">
    <property type="entry name" value="RNA_pol_Rpb1_4"/>
</dbReference>
<dbReference type="InterPro" id="IPR007081">
    <property type="entry name" value="RNA_pol_Rpb1_5"/>
</dbReference>
<dbReference type="InterPro" id="IPR038120">
    <property type="entry name" value="Rpb1_funnel_sf"/>
</dbReference>
<dbReference type="NCBIfam" id="NF002724">
    <property type="entry name" value="PRK02597.1"/>
    <property type="match status" value="1"/>
</dbReference>
<dbReference type="NCBIfam" id="TIGR02388">
    <property type="entry name" value="rpoC2_cyan"/>
    <property type="match status" value="1"/>
</dbReference>
<dbReference type="PANTHER" id="PTHR19376">
    <property type="entry name" value="DNA-DIRECTED RNA POLYMERASE"/>
    <property type="match status" value="1"/>
</dbReference>
<dbReference type="PANTHER" id="PTHR19376:SF54">
    <property type="entry name" value="DNA-DIRECTED RNA POLYMERASE SUBUNIT BETA"/>
    <property type="match status" value="1"/>
</dbReference>
<dbReference type="Pfam" id="PF04983">
    <property type="entry name" value="RNA_pol_Rpb1_3"/>
    <property type="match status" value="1"/>
</dbReference>
<dbReference type="Pfam" id="PF05000">
    <property type="entry name" value="RNA_pol_Rpb1_4"/>
    <property type="match status" value="1"/>
</dbReference>
<dbReference type="Pfam" id="PF04998">
    <property type="entry name" value="RNA_pol_Rpb1_5"/>
    <property type="match status" value="2"/>
</dbReference>
<dbReference type="SUPFAM" id="SSF64484">
    <property type="entry name" value="beta and beta-prime subunits of DNA dependent RNA-polymerase"/>
    <property type="match status" value="1"/>
</dbReference>
<feature type="chain" id="PRO_0000353531" description="DNA-directed RNA polymerase subunit beta'">
    <location>
        <begin position="1"/>
        <end position="1369"/>
    </location>
</feature>
<feature type="region of interest" description="Disordered" evidence="2">
    <location>
        <begin position="1"/>
        <end position="43"/>
    </location>
</feature>
<feature type="region of interest" description="Disordered" evidence="2">
    <location>
        <begin position="1294"/>
        <end position="1369"/>
    </location>
</feature>
<feature type="compositionally biased region" description="Basic residues" evidence="2">
    <location>
        <begin position="7"/>
        <end position="24"/>
    </location>
</feature>
<feature type="compositionally biased region" description="Acidic residues" evidence="2">
    <location>
        <begin position="1342"/>
        <end position="1351"/>
    </location>
</feature>
<feature type="compositionally biased region" description="Low complexity" evidence="2">
    <location>
        <begin position="1357"/>
        <end position="1369"/>
    </location>
</feature>
<feature type="binding site" evidence="1">
    <location>
        <position position="253"/>
    </location>
    <ligand>
        <name>Zn(2+)</name>
        <dbReference type="ChEBI" id="CHEBI:29105"/>
    </ligand>
</feature>
<feature type="binding site" evidence="1">
    <location>
        <position position="320"/>
    </location>
    <ligand>
        <name>Zn(2+)</name>
        <dbReference type="ChEBI" id="CHEBI:29105"/>
    </ligand>
</feature>
<feature type="binding site" evidence="1">
    <location>
        <position position="327"/>
    </location>
    <ligand>
        <name>Zn(2+)</name>
        <dbReference type="ChEBI" id="CHEBI:29105"/>
    </ligand>
</feature>
<feature type="binding site" evidence="1">
    <location>
        <position position="330"/>
    </location>
    <ligand>
        <name>Zn(2+)</name>
        <dbReference type="ChEBI" id="CHEBI:29105"/>
    </ligand>
</feature>
<sequence length="1369" mass="149774">MTSSSPKTRKSSTKSKAKRGSKSKKAAEIKAVQRLSKTPPPFRNKVVDKKVLKNLVAWAFKHHGTAATAAMADNLKDLGFRYATQAAVSISVDDLKVPEAKQDLLGQAEELITATEECYRLGEITEVERHTKVIDTWTETNERLVDAVKKNFNQNDPLNSVWMMANSGARGNMSQVRQLVGMRGLMANPQGEIIDLPIRTNFREGLTVTEYVISSYGARKGLVDTALRTADSGYLTRRLVDVAQDVIVREEDCGTTRSILISAEDGKFGNRLVGRLTSEQVVNADQEVLAERDTPIDPQLSKKFEQSNLQGVRVRSPLTCEATRSVCRKCYGWALAHNQLVDLGEAVGIVAAQSIGEPGTQLTMRTFHTGGVSTAETGVVRSTLSGKVEFGSKARVRGYRTPHGVEAQQAEVDFNLSIVPTSGSKPQKIDIPIGSLLFVDNGQNIDIDVTVAQIASGTVQKSVEKATKDVICDLAGQVRYETIIQPREVTDRQGNITLKAQRLGRLWVLAGDVYNLPPNALPVVSGNVSVKEGQVLAEASQASEFGGEVRLRDSIGDSREVQIVTTSMILNDFKLLEESTHSGEIWHLEAQDNTRYRLNTIPGSKIGNNEVIAELSDDRFKTETGGLIKYAPGLTIKKARSAKNGYEVSKGGTLLWIPQETHEINKDISLLMIKDRQWIEAGTEVVKDIFSQTAGIVTVTQKNDILREIIVRSGTFKLCKESKALDRFEGDGQIVNPGETIAKGIKTDSMVMVQSVETPEGKGLLLRSVEEFTIPDQAQLPELKHVKQPKGPSLGIKASQRLAYKDGELIKSVEGVELLKTQLMLETFDTTPQMTVDVEVIHDLNSKGDRLKLVILESILVRRDTTSDSSHGSTHTELQIENAQVVSAGDVVATTQILCKQEGVVQLPDAVDGDPVRRLIVERDEDTITIDSKGTTLLKVGQRVVDGDFVSKDQSIDACGEIENIDGKKVKLRLGRPYMVSPDSVLHVRDGDLVQRGDGLALLVFERQKTGDIVQGLPRIEELLEARRPRDSAILCKKSGTVDIKKGDDDDSVVVSIIEDNDVISEYPILLGRNVMVRNSQQVIAGEFLTDGPVNPHELLECFFTDLRDKKPLMDAAQEAIAKLQHRMVSEVQNVYKSQGVAIDDKHIEVIVRQMTSKVRIEDAGDTTFLPGELIELRQVEDTNQAISITGGAPSEFTPVLLGITKASLNTDSFISAASFQETTRVLTEAAIEGKSDWLRGLKENVIIGRLIPAGTGFSGFVEELNAEAGPHPDILAEDPAGYRRIQNLRPDYTVDMPSSPVAKNTAVLDDPSDEDLEATRSRHGIDPTTSNFAAFARPTGDDELSAEDQMPDPAALEGLQEEGLLSDE</sequence>
<name>RPOC2_PROM1</name>
<proteinExistence type="inferred from homology"/>
<reference key="1">
    <citation type="journal article" date="2007" name="PLoS Genet.">
        <title>Patterns and implications of gene gain and loss in the evolution of Prochlorococcus.</title>
        <authorList>
            <person name="Kettler G.C."/>
            <person name="Martiny A.C."/>
            <person name="Huang K."/>
            <person name="Zucker J."/>
            <person name="Coleman M.L."/>
            <person name="Rodrigue S."/>
            <person name="Chen F."/>
            <person name="Lapidus A."/>
            <person name="Ferriera S."/>
            <person name="Johnson J."/>
            <person name="Steglich C."/>
            <person name="Church G.M."/>
            <person name="Richardson P."/>
            <person name="Chisholm S.W."/>
        </authorList>
    </citation>
    <scope>NUCLEOTIDE SEQUENCE [LARGE SCALE GENOMIC DNA]</scope>
    <source>
        <strain>NATL1A</strain>
    </source>
</reference>
<organism>
    <name type="scientific">Prochlorococcus marinus (strain NATL1A)</name>
    <dbReference type="NCBI Taxonomy" id="167555"/>
    <lineage>
        <taxon>Bacteria</taxon>
        <taxon>Bacillati</taxon>
        <taxon>Cyanobacteriota</taxon>
        <taxon>Cyanophyceae</taxon>
        <taxon>Synechococcales</taxon>
        <taxon>Prochlorococcaceae</taxon>
        <taxon>Prochlorococcus</taxon>
    </lineage>
</organism>
<comment type="function">
    <text evidence="1">DNA-dependent RNA polymerase catalyzes the transcription of DNA into RNA using the four ribonucleoside triphosphates as substrates.</text>
</comment>
<comment type="catalytic activity">
    <reaction evidence="1">
        <text>RNA(n) + a ribonucleoside 5'-triphosphate = RNA(n+1) + diphosphate</text>
        <dbReference type="Rhea" id="RHEA:21248"/>
        <dbReference type="Rhea" id="RHEA-COMP:14527"/>
        <dbReference type="Rhea" id="RHEA-COMP:17342"/>
        <dbReference type="ChEBI" id="CHEBI:33019"/>
        <dbReference type="ChEBI" id="CHEBI:61557"/>
        <dbReference type="ChEBI" id="CHEBI:140395"/>
        <dbReference type="EC" id="2.7.7.6"/>
    </reaction>
</comment>
<comment type="cofactor">
    <cofactor evidence="1">
        <name>Zn(2+)</name>
        <dbReference type="ChEBI" id="CHEBI:29105"/>
    </cofactor>
    <text evidence="1">Binds 1 Zn(2+) ion per subunit.</text>
</comment>
<comment type="subunit">
    <text evidence="1">In cyanobacteria the RNAP catalytic core is composed of 2 alpha, 1 beta, 1 beta', 1 gamma and 1 omega subunit. When a sigma factor is associated with the core the holoenzyme is formed, which can initiate transcription.</text>
</comment>
<comment type="similarity">
    <text evidence="1">Belongs to the RNA polymerase beta' chain family. RpoC2 subfamily.</text>
</comment>